<reference key="1">
    <citation type="journal article" date="2004" name="Proc. Natl. Acad. Sci. U.S.A.">
        <title>The complete genomic sequence of Nocardia farcinica IFM 10152.</title>
        <authorList>
            <person name="Ishikawa J."/>
            <person name="Yamashita A."/>
            <person name="Mikami Y."/>
            <person name="Hoshino Y."/>
            <person name="Kurita H."/>
            <person name="Hotta K."/>
            <person name="Shiba T."/>
            <person name="Hattori M."/>
        </authorList>
    </citation>
    <scope>NUCLEOTIDE SEQUENCE [LARGE SCALE GENOMIC DNA]</scope>
    <source>
        <strain>IFM 10152</strain>
    </source>
</reference>
<dbReference type="EC" id="2.1.1.228" evidence="1"/>
<dbReference type="EMBL" id="AP006618">
    <property type="protein sequence ID" value="BAD59003.1"/>
    <property type="molecule type" value="Genomic_DNA"/>
</dbReference>
<dbReference type="RefSeq" id="WP_011210688.1">
    <property type="nucleotide sequence ID" value="NC_006361.1"/>
</dbReference>
<dbReference type="SMR" id="Q5YS38"/>
<dbReference type="STRING" id="247156.NFA_41540"/>
<dbReference type="GeneID" id="61134790"/>
<dbReference type="KEGG" id="nfa:NFA_41540"/>
<dbReference type="eggNOG" id="COG0336">
    <property type="taxonomic scope" value="Bacteria"/>
</dbReference>
<dbReference type="HOGENOM" id="CLU_047363_0_0_11"/>
<dbReference type="OrthoDB" id="9807416at2"/>
<dbReference type="Proteomes" id="UP000006820">
    <property type="component" value="Chromosome"/>
</dbReference>
<dbReference type="GO" id="GO:0005829">
    <property type="term" value="C:cytosol"/>
    <property type="evidence" value="ECO:0007669"/>
    <property type="project" value="TreeGrafter"/>
</dbReference>
<dbReference type="GO" id="GO:0052906">
    <property type="term" value="F:tRNA (guanine(37)-N1)-methyltransferase activity"/>
    <property type="evidence" value="ECO:0007669"/>
    <property type="project" value="UniProtKB-UniRule"/>
</dbReference>
<dbReference type="GO" id="GO:0002939">
    <property type="term" value="P:tRNA N1-guanine methylation"/>
    <property type="evidence" value="ECO:0007669"/>
    <property type="project" value="TreeGrafter"/>
</dbReference>
<dbReference type="CDD" id="cd18080">
    <property type="entry name" value="TrmD-like"/>
    <property type="match status" value="1"/>
</dbReference>
<dbReference type="FunFam" id="1.10.1270.20:FF:000004">
    <property type="entry name" value="tRNA (guanine-N(1)-)-methyltransferase"/>
    <property type="match status" value="1"/>
</dbReference>
<dbReference type="FunFam" id="3.40.1280.10:FF:000001">
    <property type="entry name" value="tRNA (guanine-N(1)-)-methyltransferase"/>
    <property type="match status" value="1"/>
</dbReference>
<dbReference type="Gene3D" id="3.40.1280.10">
    <property type="match status" value="1"/>
</dbReference>
<dbReference type="Gene3D" id="1.10.1270.20">
    <property type="entry name" value="tRNA(m1g37)methyltransferase, domain 2"/>
    <property type="match status" value="1"/>
</dbReference>
<dbReference type="HAMAP" id="MF_00605">
    <property type="entry name" value="TrmD"/>
    <property type="match status" value="1"/>
</dbReference>
<dbReference type="InterPro" id="IPR029028">
    <property type="entry name" value="Alpha/beta_knot_MTases"/>
</dbReference>
<dbReference type="InterPro" id="IPR023148">
    <property type="entry name" value="tRNA_m1G_MeTrfase_C_sf"/>
</dbReference>
<dbReference type="InterPro" id="IPR002649">
    <property type="entry name" value="tRNA_m1G_MeTrfase_TrmD"/>
</dbReference>
<dbReference type="InterPro" id="IPR029026">
    <property type="entry name" value="tRNA_m1G_MTases_N"/>
</dbReference>
<dbReference type="InterPro" id="IPR016009">
    <property type="entry name" value="tRNA_MeTrfase_TRMD/TRM10"/>
</dbReference>
<dbReference type="NCBIfam" id="NF000648">
    <property type="entry name" value="PRK00026.1"/>
    <property type="match status" value="1"/>
</dbReference>
<dbReference type="NCBIfam" id="TIGR00088">
    <property type="entry name" value="trmD"/>
    <property type="match status" value="1"/>
</dbReference>
<dbReference type="PANTHER" id="PTHR46417">
    <property type="entry name" value="TRNA (GUANINE-N(1)-)-METHYLTRANSFERASE"/>
    <property type="match status" value="1"/>
</dbReference>
<dbReference type="PANTHER" id="PTHR46417:SF1">
    <property type="entry name" value="TRNA (GUANINE-N(1)-)-METHYLTRANSFERASE"/>
    <property type="match status" value="1"/>
</dbReference>
<dbReference type="Pfam" id="PF01746">
    <property type="entry name" value="tRNA_m1G_MT"/>
    <property type="match status" value="1"/>
</dbReference>
<dbReference type="PIRSF" id="PIRSF000386">
    <property type="entry name" value="tRNA_mtase"/>
    <property type="match status" value="1"/>
</dbReference>
<dbReference type="SUPFAM" id="SSF75217">
    <property type="entry name" value="alpha/beta knot"/>
    <property type="match status" value="1"/>
</dbReference>
<protein>
    <recommendedName>
        <fullName evidence="1">tRNA (guanine-N(1)-)-methyltransferase</fullName>
        <ecNumber evidence="1">2.1.1.228</ecNumber>
    </recommendedName>
    <alternativeName>
        <fullName evidence="1">M1G-methyltransferase</fullName>
    </alternativeName>
    <alternativeName>
        <fullName evidence="1">tRNA [GM37] methyltransferase</fullName>
    </alternativeName>
</protein>
<keyword id="KW-0963">Cytoplasm</keyword>
<keyword id="KW-0489">Methyltransferase</keyword>
<keyword id="KW-1185">Reference proteome</keyword>
<keyword id="KW-0949">S-adenosyl-L-methionine</keyword>
<keyword id="KW-0808">Transferase</keyword>
<keyword id="KW-0819">tRNA processing</keyword>
<sequence length="231" mass="25366">MKLDVVTIFPEYLEPLRTALLGKAIDKGLISVDVHDLRRWTHDVHKSVDDAPYGGGPGMVMKPTVWGDALDAVCPDDALLVVPTPAGVPFTQATAQRWAAERHLVFACGRYEGIDQRVFDDAARRVRVEEVSIGDYVLIGGEAAVLVMVEAVVRLLPGVLGNQQSHEQDSFSDGLLEGPSYTRPVSWRGLEVPPILLSGDHAKVAAWRREQSLARTRERRPDLLPPESSSD</sequence>
<gene>
    <name evidence="1" type="primary">trmD</name>
    <name type="ordered locus">NFA_41540</name>
</gene>
<proteinExistence type="inferred from homology"/>
<feature type="chain" id="PRO_0000060423" description="tRNA (guanine-N(1)-)-methyltransferase">
    <location>
        <begin position="1"/>
        <end position="231"/>
    </location>
</feature>
<feature type="binding site" evidence="1">
    <location>
        <position position="109"/>
    </location>
    <ligand>
        <name>S-adenosyl-L-methionine</name>
        <dbReference type="ChEBI" id="CHEBI:59789"/>
    </ligand>
</feature>
<feature type="binding site" evidence="1">
    <location>
        <begin position="133"/>
        <end position="138"/>
    </location>
    <ligand>
        <name>S-adenosyl-L-methionine</name>
        <dbReference type="ChEBI" id="CHEBI:59789"/>
    </ligand>
</feature>
<organism>
    <name type="scientific">Nocardia farcinica (strain IFM 10152)</name>
    <dbReference type="NCBI Taxonomy" id="247156"/>
    <lineage>
        <taxon>Bacteria</taxon>
        <taxon>Bacillati</taxon>
        <taxon>Actinomycetota</taxon>
        <taxon>Actinomycetes</taxon>
        <taxon>Mycobacteriales</taxon>
        <taxon>Nocardiaceae</taxon>
        <taxon>Nocardia</taxon>
    </lineage>
</organism>
<accession>Q5YS38</accession>
<comment type="function">
    <text evidence="1">Specifically methylates guanosine-37 in various tRNAs.</text>
</comment>
<comment type="catalytic activity">
    <reaction evidence="1">
        <text>guanosine(37) in tRNA + S-adenosyl-L-methionine = N(1)-methylguanosine(37) in tRNA + S-adenosyl-L-homocysteine + H(+)</text>
        <dbReference type="Rhea" id="RHEA:36899"/>
        <dbReference type="Rhea" id="RHEA-COMP:10145"/>
        <dbReference type="Rhea" id="RHEA-COMP:10147"/>
        <dbReference type="ChEBI" id="CHEBI:15378"/>
        <dbReference type="ChEBI" id="CHEBI:57856"/>
        <dbReference type="ChEBI" id="CHEBI:59789"/>
        <dbReference type="ChEBI" id="CHEBI:73542"/>
        <dbReference type="ChEBI" id="CHEBI:74269"/>
        <dbReference type="EC" id="2.1.1.228"/>
    </reaction>
</comment>
<comment type="subunit">
    <text evidence="1">Homodimer.</text>
</comment>
<comment type="subcellular location">
    <subcellularLocation>
        <location evidence="1">Cytoplasm</location>
    </subcellularLocation>
</comment>
<comment type="similarity">
    <text evidence="1">Belongs to the RNA methyltransferase TrmD family.</text>
</comment>
<evidence type="ECO:0000255" key="1">
    <source>
        <dbReference type="HAMAP-Rule" id="MF_00605"/>
    </source>
</evidence>
<name>TRMD_NOCFA</name>